<sequence>MISRYTRKAVPQSLELKGITKHALNHHPPPEKLEEISPTSDSHEKDTSSQSKSDITRESSFTSADTGNSLSAFPSYTGAGISTEGSSDFSWGYGELDQNATEKVQTMFTAIDELLYEQKLSVHTKSLQEECQQWTASFPHLRILGRQIITPSEGYRLYPRSPSAVSASYETTLSQERDSTIFGIRGKKLHFSSSYAHKASSIAKSSSFCSMERDEEDSIIVSEGIIEEYLAFDHIDIEEGFHGKKSEAATEKQKLGYPPIAPFYCMKEDVLAYVFDSVWCKVVSCMEQLTRSHWEGFASDDESNVAVTRPDSESSCVLSELHPLVLPRVPQSKVLYITSNPMSLCQASRHQPNVNDLLVHGMPLQPRNLSLMDKLLDLDDKLLMRPGSSTILSTRNWPNRAVEFSTSSLSYTVQSTRRRNPPPRTLHPISTSHSCAETPRSVEEILRGARVPVAPDSLSSPSPTPLSRNNLLPPIGTAEVEHVSTVGPQRQMKPHGDSSRAQSAVVDEPNYQQPQERLLLPDFFPRPNTTQSFLLDTQYRRSCAVEYPHQARPGRGSAGPQLHGSTKSQSGGRPVSRTRQGP</sequence>
<organism>
    <name type="scientific">Homo sapiens</name>
    <name type="common">Human</name>
    <dbReference type="NCBI Taxonomy" id="9606"/>
    <lineage>
        <taxon>Eukaryota</taxon>
        <taxon>Metazoa</taxon>
        <taxon>Chordata</taxon>
        <taxon>Craniata</taxon>
        <taxon>Vertebrata</taxon>
        <taxon>Euteleostomi</taxon>
        <taxon>Mammalia</taxon>
        <taxon>Eutheria</taxon>
        <taxon>Euarchontoglires</taxon>
        <taxon>Primates</taxon>
        <taxon>Haplorrhini</taxon>
        <taxon>Catarrhini</taxon>
        <taxon>Hominidae</taxon>
        <taxon>Homo</taxon>
    </lineage>
</organism>
<evidence type="ECO:0000256" key="1">
    <source>
        <dbReference type="SAM" id="MobiDB-lite"/>
    </source>
</evidence>
<evidence type="ECO:0000269" key="2">
    <source>
    </source>
</evidence>
<evidence type="ECO:0000303" key="3">
    <source>
    </source>
</evidence>
<evidence type="ECO:0000305" key="4"/>
<evidence type="ECO:0000305" key="5">
    <source>
    </source>
</evidence>
<evidence type="ECO:0000312" key="6">
    <source>
        <dbReference type="HGNC" id="HGNC:29162"/>
    </source>
</evidence>
<comment type="function">
    <text evidence="2">Involved in the localization of proteins to the cilium and cilium assembly. Indirectly regulates the signaling functions of the cilium, being required for normal SHH/smoothened signaling and proper development.</text>
</comment>
<comment type="subunit">
    <text evidence="2">Interacts with TBC1D32; may play a role in cilium assembly.</text>
</comment>
<comment type="subcellular location">
    <subcellularLocation>
        <location evidence="5">Cell projection</location>
        <location evidence="5">Cilium</location>
    </subcellularLocation>
</comment>
<comment type="alternative products">
    <event type="alternative splicing"/>
    <isoform>
        <id>Q96BN6-1</id>
        <name>1</name>
        <sequence type="displayed"/>
    </isoform>
    <isoform>
        <id>Q96BN6-2</id>
        <name>2</name>
        <sequence type="described" ref="VSP_031533 VSP_031534"/>
    </isoform>
</comment>
<comment type="disease" evidence="2">
    <disease id="DI-05752">
        <name>Joubert syndrome 36</name>
        <acronym>JBTS36</acronym>
        <description>A form of Joubert syndrome, a disorder presenting with cerebellar ataxia, oculomotor apraxia, hypotonia, neonatal breathing abnormalities and psychomotor delay. Neuroradiologically, it is characterized by cerebellar vermian hypoplasia/aplasia, thickened and reoriented superior cerebellar peduncles, and an abnormally large interpeduncular fossa, giving the appearance of a molar tooth on transaxial slices (molar tooth sign). Additional variable features include retinal dystrophy, renal disease, liver fibrosis, and polydactyly. JBTS36 inheritance is autosomal recessive.</description>
        <dbReference type="MIM" id="618763"/>
    </disease>
    <text>The disease is caused by variants affecting the gene represented in this entry.</text>
</comment>
<comment type="similarity">
    <text evidence="4">Belongs to the FAM149 family.</text>
</comment>
<comment type="sequence caution" evidence="4">
    <conflict type="erroneous initiation">
        <sequence resource="EMBL-CDS" id="AAH15394"/>
    </conflict>
    <text>Truncated N-terminus.</text>
</comment>
<proteinExistence type="evidence at protein level"/>
<protein>
    <recommendedName>
        <fullName evidence="5">Primary cilium assembly protein FAM149B1</fullName>
    </recommendedName>
</protein>
<gene>
    <name evidence="6" type="primary">FAM149B1</name>
    <name type="synonym">KIAA0974</name>
</gene>
<reference key="1">
    <citation type="journal article" date="2004" name="Nature">
        <title>The DNA sequence and comparative analysis of human chromosome 10.</title>
        <authorList>
            <person name="Deloukas P."/>
            <person name="Earthrowl M.E."/>
            <person name="Grafham D.V."/>
            <person name="Rubenfield M."/>
            <person name="French L."/>
            <person name="Steward C.A."/>
            <person name="Sims S.K."/>
            <person name="Jones M.C."/>
            <person name="Searle S."/>
            <person name="Scott C."/>
            <person name="Howe K."/>
            <person name="Hunt S.E."/>
            <person name="Andrews T.D."/>
            <person name="Gilbert J.G.R."/>
            <person name="Swarbreck D."/>
            <person name="Ashurst J.L."/>
            <person name="Taylor A."/>
            <person name="Battles J."/>
            <person name="Bird C.P."/>
            <person name="Ainscough R."/>
            <person name="Almeida J.P."/>
            <person name="Ashwell R.I.S."/>
            <person name="Ambrose K.D."/>
            <person name="Babbage A.K."/>
            <person name="Bagguley C.L."/>
            <person name="Bailey J."/>
            <person name="Banerjee R."/>
            <person name="Bates K."/>
            <person name="Beasley H."/>
            <person name="Bray-Allen S."/>
            <person name="Brown A.J."/>
            <person name="Brown J.Y."/>
            <person name="Burford D.C."/>
            <person name="Burrill W."/>
            <person name="Burton J."/>
            <person name="Cahill P."/>
            <person name="Camire D."/>
            <person name="Carter N.P."/>
            <person name="Chapman J.C."/>
            <person name="Clark S.Y."/>
            <person name="Clarke G."/>
            <person name="Clee C.M."/>
            <person name="Clegg S."/>
            <person name="Corby N."/>
            <person name="Coulson A."/>
            <person name="Dhami P."/>
            <person name="Dutta I."/>
            <person name="Dunn M."/>
            <person name="Faulkner L."/>
            <person name="Frankish A."/>
            <person name="Frankland J.A."/>
            <person name="Garner P."/>
            <person name="Garnett J."/>
            <person name="Gribble S."/>
            <person name="Griffiths C."/>
            <person name="Grocock R."/>
            <person name="Gustafson E."/>
            <person name="Hammond S."/>
            <person name="Harley J.L."/>
            <person name="Hart E."/>
            <person name="Heath P.D."/>
            <person name="Ho T.P."/>
            <person name="Hopkins B."/>
            <person name="Horne J."/>
            <person name="Howden P.J."/>
            <person name="Huckle E."/>
            <person name="Hynds C."/>
            <person name="Johnson C."/>
            <person name="Johnson D."/>
            <person name="Kana A."/>
            <person name="Kay M."/>
            <person name="Kimberley A.M."/>
            <person name="Kershaw J.K."/>
            <person name="Kokkinaki M."/>
            <person name="Laird G.K."/>
            <person name="Lawlor S."/>
            <person name="Lee H.M."/>
            <person name="Leongamornlert D.A."/>
            <person name="Laird G."/>
            <person name="Lloyd C."/>
            <person name="Lloyd D.M."/>
            <person name="Loveland J."/>
            <person name="Lovell J."/>
            <person name="McLaren S."/>
            <person name="McLay K.E."/>
            <person name="McMurray A."/>
            <person name="Mashreghi-Mohammadi M."/>
            <person name="Matthews L."/>
            <person name="Milne S."/>
            <person name="Nickerson T."/>
            <person name="Nguyen M."/>
            <person name="Overton-Larty E."/>
            <person name="Palmer S.A."/>
            <person name="Pearce A.V."/>
            <person name="Peck A.I."/>
            <person name="Pelan S."/>
            <person name="Phillimore B."/>
            <person name="Porter K."/>
            <person name="Rice C.M."/>
            <person name="Rogosin A."/>
            <person name="Ross M.T."/>
            <person name="Sarafidou T."/>
            <person name="Sehra H.K."/>
            <person name="Shownkeen R."/>
            <person name="Skuce C.D."/>
            <person name="Smith M."/>
            <person name="Standring L."/>
            <person name="Sycamore N."/>
            <person name="Tester J."/>
            <person name="Thorpe A."/>
            <person name="Torcasso W."/>
            <person name="Tracey A."/>
            <person name="Tromans A."/>
            <person name="Tsolas J."/>
            <person name="Wall M."/>
            <person name="Walsh J."/>
            <person name="Wang H."/>
            <person name="Weinstock K."/>
            <person name="West A.P."/>
            <person name="Willey D.L."/>
            <person name="Whitehead S.L."/>
            <person name="Wilming L."/>
            <person name="Wray P.W."/>
            <person name="Young L."/>
            <person name="Chen Y."/>
            <person name="Lovering R.C."/>
            <person name="Moschonas N.K."/>
            <person name="Siebert R."/>
            <person name="Fechtel K."/>
            <person name="Bentley D."/>
            <person name="Durbin R.M."/>
            <person name="Hubbard T."/>
            <person name="Doucette-Stamm L."/>
            <person name="Beck S."/>
            <person name="Smith D.R."/>
            <person name="Rogers J."/>
        </authorList>
    </citation>
    <scope>NUCLEOTIDE SEQUENCE [LARGE SCALE GENOMIC DNA]</scope>
</reference>
<reference key="2">
    <citation type="journal article" date="1999" name="DNA Res.">
        <title>Prediction of the coding sequences of unidentified human genes. XIII. The complete sequences of 100 new cDNA clones from brain which code for large proteins in vitro.</title>
        <authorList>
            <person name="Nagase T."/>
            <person name="Ishikawa K."/>
            <person name="Suyama M."/>
            <person name="Kikuno R."/>
            <person name="Hirosawa M."/>
            <person name="Miyajima N."/>
            <person name="Tanaka A."/>
            <person name="Kotani H."/>
            <person name="Nomura N."/>
            <person name="Ohara O."/>
        </authorList>
    </citation>
    <scope>NUCLEOTIDE SEQUENCE [LARGE SCALE MRNA] OF 18-582 (ISOFORM 1)</scope>
    <source>
        <tissue>Brain</tissue>
    </source>
</reference>
<reference key="3">
    <citation type="journal article" date="2004" name="Genome Res.">
        <title>The status, quality, and expansion of the NIH full-length cDNA project: the Mammalian Gene Collection (MGC).</title>
        <authorList>
            <consortium name="The MGC Project Team"/>
        </authorList>
    </citation>
    <scope>NUCLEOTIDE SEQUENCE [LARGE SCALE MRNA] OF 61-582 (ISOFORM 2)</scope>
    <source>
        <tissue>Prostate</tissue>
    </source>
</reference>
<reference key="4">
    <citation type="journal article" date="2019" name="Am. J. Hum. Genet.">
        <title>Bi-allelic mutations in FAM149B1 cause abnormal primary cilium and a range of ciliopathy phenotypes in humans.</title>
        <authorList>
            <person name="Shaheen R."/>
            <person name="Jiang N."/>
            <person name="Alzahrani F."/>
            <person name="Ewida N."/>
            <person name="Al-Sheddi T."/>
            <person name="Alobeid E."/>
            <person name="Musaev D."/>
            <person name="Stanley V."/>
            <person name="Hashem M."/>
            <person name="Ibrahim N."/>
            <person name="Abdulwahab F."/>
            <person name="Alshenqiti A."/>
            <person name="Sonmez F.M."/>
            <person name="Saqati N."/>
            <person name="Alzaidan H."/>
            <person name="Al-Qattan M.M."/>
            <person name="Al-Mohanna F."/>
            <person name="Gleeson J.G."/>
            <person name="Alkuraya F.S."/>
        </authorList>
    </citation>
    <scope>INVOLVEMENT IN JBTS36</scope>
    <scope>VARIANT JBTS36 147-GLN--PRO-582 DEL</scope>
    <scope>CHARACTERIZATION OF VARIANT JBTS36 147-GLN--PRO-582 DEL</scope>
    <scope>FUNCTION</scope>
    <scope>INTERACTION WITH TBC1D32</scope>
    <scope>SUBCELLULAR LOCATION</scope>
</reference>
<accession>Q96BN6</accession>
<accession>Q9Y2I0</accession>
<dbReference type="EMBL" id="AC016394">
    <property type="status" value="NOT_ANNOTATED_CDS"/>
    <property type="molecule type" value="Genomic_DNA"/>
</dbReference>
<dbReference type="EMBL" id="AB023191">
    <property type="protein sequence ID" value="BAA76818.1"/>
    <property type="molecule type" value="mRNA"/>
</dbReference>
<dbReference type="EMBL" id="BC015394">
    <property type="protein sequence ID" value="AAH15394.1"/>
    <property type="status" value="ALT_INIT"/>
    <property type="molecule type" value="mRNA"/>
</dbReference>
<dbReference type="CCDS" id="CCDS44435.1">
    <molecule id="Q96BN6-1"/>
</dbReference>
<dbReference type="RefSeq" id="NP_775483.1">
    <molecule id="Q96BN6-1"/>
    <property type="nucleotide sequence ID" value="NM_173348.2"/>
</dbReference>
<dbReference type="RefSeq" id="XP_005269801.2">
    <molecule id="Q96BN6-2"/>
    <property type="nucleotide sequence ID" value="XM_005269744.3"/>
</dbReference>
<dbReference type="RefSeq" id="XP_054221671.1">
    <molecule id="Q96BN6-2"/>
    <property type="nucleotide sequence ID" value="XM_054365696.1"/>
</dbReference>
<dbReference type="BioGRID" id="130429">
    <property type="interactions" value="6"/>
</dbReference>
<dbReference type="FunCoup" id="Q96BN6">
    <property type="interactions" value="3218"/>
</dbReference>
<dbReference type="IntAct" id="Q96BN6">
    <property type="interactions" value="4"/>
</dbReference>
<dbReference type="STRING" id="9606.ENSP00000242505"/>
<dbReference type="GlyGen" id="Q96BN6">
    <property type="glycosylation" value="1 site"/>
</dbReference>
<dbReference type="iPTMnet" id="Q96BN6"/>
<dbReference type="PhosphoSitePlus" id="Q96BN6"/>
<dbReference type="BioMuta" id="FAM149B1"/>
<dbReference type="DMDM" id="182676632"/>
<dbReference type="jPOST" id="Q96BN6"/>
<dbReference type="MassIVE" id="Q96BN6"/>
<dbReference type="PaxDb" id="9606-ENSP00000242505"/>
<dbReference type="PeptideAtlas" id="Q96BN6"/>
<dbReference type="ProteomicsDB" id="76092">
    <molecule id="Q96BN6-1"/>
</dbReference>
<dbReference type="ProteomicsDB" id="76093">
    <molecule id="Q96BN6-2"/>
</dbReference>
<dbReference type="Antibodypedia" id="49231">
    <property type="antibodies" value="67 antibodies from 11 providers"/>
</dbReference>
<dbReference type="DNASU" id="317662"/>
<dbReference type="Ensembl" id="ENST00000242505.11">
    <molecule id="Q96BN6-1"/>
    <property type="protein sequence ID" value="ENSP00000242505.6"/>
    <property type="gene ID" value="ENSG00000138286.15"/>
</dbReference>
<dbReference type="GeneID" id="317662"/>
<dbReference type="KEGG" id="hsa:317662"/>
<dbReference type="MANE-Select" id="ENST00000242505.11">
    <property type="protein sequence ID" value="ENSP00000242505.6"/>
    <property type="RefSeq nucleotide sequence ID" value="NM_173348.2"/>
    <property type="RefSeq protein sequence ID" value="NP_775483.1"/>
</dbReference>
<dbReference type="UCSC" id="uc009xqz.4">
    <molecule id="Q96BN6-1"/>
    <property type="organism name" value="human"/>
</dbReference>
<dbReference type="AGR" id="HGNC:29162"/>
<dbReference type="CTD" id="317662"/>
<dbReference type="DisGeNET" id="317662"/>
<dbReference type="GeneCards" id="FAM149B1"/>
<dbReference type="HGNC" id="HGNC:29162">
    <property type="gene designation" value="FAM149B1"/>
</dbReference>
<dbReference type="HPA" id="ENSG00000138286">
    <property type="expression patterns" value="Low tissue specificity"/>
</dbReference>
<dbReference type="MalaCards" id="FAM149B1"/>
<dbReference type="MIM" id="618413">
    <property type="type" value="gene"/>
</dbReference>
<dbReference type="MIM" id="618763">
    <property type="type" value="phenotype"/>
</dbReference>
<dbReference type="neXtProt" id="NX_Q96BN6"/>
<dbReference type="OpenTargets" id="ENSG00000138286"/>
<dbReference type="Orphanet" id="2754">
    <property type="disease" value="Orofaciodigital syndrome type 6"/>
</dbReference>
<dbReference type="PharmGKB" id="PA162386399"/>
<dbReference type="VEuPathDB" id="HostDB:ENSG00000138286"/>
<dbReference type="eggNOG" id="ENOG502QVD4">
    <property type="taxonomic scope" value="Eukaryota"/>
</dbReference>
<dbReference type="GeneTree" id="ENSGT00530000063727"/>
<dbReference type="HOGENOM" id="CLU_018180_1_1_1"/>
<dbReference type="InParanoid" id="Q96BN6"/>
<dbReference type="OMA" id="EREEDCI"/>
<dbReference type="OrthoDB" id="2134133at2759"/>
<dbReference type="PAN-GO" id="Q96BN6">
    <property type="GO annotations" value="2 GO annotations based on evolutionary models"/>
</dbReference>
<dbReference type="PhylomeDB" id="Q96BN6"/>
<dbReference type="TreeFam" id="TF330725"/>
<dbReference type="PathwayCommons" id="Q96BN6"/>
<dbReference type="SignaLink" id="Q96BN6"/>
<dbReference type="BioGRID-ORCS" id="317662">
    <property type="hits" value="27 hits in 1157 CRISPR screens"/>
</dbReference>
<dbReference type="ChiTaRS" id="FAM149B1">
    <property type="organism name" value="human"/>
</dbReference>
<dbReference type="GenomeRNAi" id="317662"/>
<dbReference type="Pharos" id="Q96BN6">
    <property type="development level" value="Tdark"/>
</dbReference>
<dbReference type="PRO" id="PR:Q96BN6"/>
<dbReference type="Proteomes" id="UP000005640">
    <property type="component" value="Chromosome 10"/>
</dbReference>
<dbReference type="RNAct" id="Q96BN6">
    <property type="molecule type" value="protein"/>
</dbReference>
<dbReference type="Bgee" id="ENSG00000138286">
    <property type="expression patterns" value="Expressed in C1 segment of cervical spinal cord and 174 other cell types or tissues"/>
</dbReference>
<dbReference type="ExpressionAtlas" id="Q96BN6">
    <property type="expression patterns" value="baseline and differential"/>
</dbReference>
<dbReference type="GO" id="GO:0005929">
    <property type="term" value="C:cilium"/>
    <property type="evidence" value="ECO:0007669"/>
    <property type="project" value="UniProtKB-SubCell"/>
</dbReference>
<dbReference type="GO" id="GO:0060271">
    <property type="term" value="P:cilium assembly"/>
    <property type="evidence" value="ECO:0000315"/>
    <property type="project" value="UniProtKB"/>
</dbReference>
<dbReference type="GO" id="GO:0061512">
    <property type="term" value="P:protein localization to cilium"/>
    <property type="evidence" value="ECO:0000315"/>
    <property type="project" value="UniProtKB"/>
</dbReference>
<dbReference type="InterPro" id="IPR022194">
    <property type="entry name" value="DUF3719"/>
</dbReference>
<dbReference type="InterPro" id="IPR039630">
    <property type="entry name" value="FAM149"/>
</dbReference>
<dbReference type="PANTHER" id="PTHR31997">
    <property type="entry name" value="AGAP003710-PA"/>
    <property type="match status" value="1"/>
</dbReference>
<dbReference type="PANTHER" id="PTHR31997:SF0">
    <property type="entry name" value="PRIMARY CILIUM ASSEMBLY PROTEIN FAM149B1"/>
    <property type="match status" value="1"/>
</dbReference>
<dbReference type="Pfam" id="PF12516">
    <property type="entry name" value="DUF3719"/>
    <property type="match status" value="1"/>
</dbReference>
<keyword id="KW-0025">Alternative splicing</keyword>
<keyword id="KW-0966">Cell projection</keyword>
<keyword id="KW-1186">Ciliopathy</keyword>
<keyword id="KW-0969">Cilium</keyword>
<keyword id="KW-0970">Cilium biogenesis/degradation</keyword>
<keyword id="KW-0225">Disease variant</keyword>
<keyword id="KW-0979">Joubert syndrome</keyword>
<keyword id="KW-1267">Proteomics identification</keyword>
<keyword id="KW-1185">Reference proteome</keyword>
<feature type="chain" id="PRO_0000319933" description="Primary cilium assembly protein FAM149B1">
    <location>
        <begin position="1"/>
        <end position="582"/>
    </location>
</feature>
<feature type="region of interest" description="Disordered" evidence="1">
    <location>
        <begin position="16"/>
        <end position="67"/>
    </location>
</feature>
<feature type="region of interest" description="Disordered" evidence="1">
    <location>
        <begin position="413"/>
        <end position="438"/>
    </location>
</feature>
<feature type="region of interest" description="Disordered" evidence="1">
    <location>
        <begin position="485"/>
        <end position="512"/>
    </location>
</feature>
<feature type="region of interest" description="Disordered" evidence="1">
    <location>
        <begin position="545"/>
        <end position="582"/>
    </location>
</feature>
<feature type="compositionally biased region" description="Basic and acidic residues" evidence="1">
    <location>
        <begin position="28"/>
        <end position="47"/>
    </location>
</feature>
<feature type="compositionally biased region" description="Polar residues" evidence="1">
    <location>
        <begin position="48"/>
        <end position="67"/>
    </location>
</feature>
<feature type="compositionally biased region" description="Polar residues" evidence="1">
    <location>
        <begin position="563"/>
        <end position="582"/>
    </location>
</feature>
<feature type="splice variant" id="VSP_031533" description="In isoform 2." evidence="3">
    <location>
        <begin position="334"/>
        <end position="341"/>
    </location>
</feature>
<feature type="splice variant" id="VSP_031534" description="In isoform 2." evidence="3">
    <original>LDTQYRRSCAVEYPHQARPGRGSAGPQLHGSTKSQSGGRPVSRTRQGP</original>
    <variation>VE</variation>
    <location>
        <begin position="535"/>
        <end position="582"/>
    </location>
</feature>
<feature type="sequence variant" id="VAR_083866" description="In JBTS36; changed protein localization to cilium; changed cilium assembly; no difference in the number of ciliated cells but SHH signaling is altered." evidence="2">
    <location>
        <begin position="147"/>
        <end position="582"/>
    </location>
</feature>
<feature type="sequence variant" id="VAR_060167" description="In dbSNP:rs12573841.">
    <original>G</original>
    <variation>R</variation>
    <location>
        <position position="571"/>
    </location>
</feature>
<name>F149B_HUMAN</name>